<evidence type="ECO:0000255" key="1">
    <source>
        <dbReference type="HAMAP-Rule" id="MF_00274"/>
    </source>
</evidence>
<evidence type="ECO:0000256" key="2">
    <source>
        <dbReference type="SAM" id="MobiDB-lite"/>
    </source>
</evidence>
<comment type="function">
    <text evidence="1">Binds to DNA and alters its conformation. May be involved in regulation of gene expression, nucleoid organization and DNA protection.</text>
</comment>
<comment type="subunit">
    <text evidence="1">Homodimer.</text>
</comment>
<comment type="subcellular location">
    <subcellularLocation>
        <location evidence="1">Cytoplasm</location>
        <location evidence="1">Nucleoid</location>
    </subcellularLocation>
</comment>
<comment type="similarity">
    <text evidence="1">Belongs to the YbaB/EbfC family.</text>
</comment>
<accession>P0A655</accession>
<accession>A0A1R3Y508</accession>
<accession>O69683</accession>
<accession>X2BPN2</accession>
<reference key="1">
    <citation type="journal article" date="2003" name="Proc. Natl. Acad. Sci. U.S.A.">
        <title>The complete genome sequence of Mycobacterium bovis.</title>
        <authorList>
            <person name="Garnier T."/>
            <person name="Eiglmeier K."/>
            <person name="Camus J.-C."/>
            <person name="Medina N."/>
            <person name="Mansoor H."/>
            <person name="Pryor M."/>
            <person name="Duthoy S."/>
            <person name="Grondin S."/>
            <person name="Lacroix C."/>
            <person name="Monsempe C."/>
            <person name="Simon S."/>
            <person name="Harris B."/>
            <person name="Atkin R."/>
            <person name="Doggett J."/>
            <person name="Mayes R."/>
            <person name="Keating L."/>
            <person name="Wheeler P.R."/>
            <person name="Parkhill J."/>
            <person name="Barrell B.G."/>
            <person name="Cole S.T."/>
            <person name="Gordon S.V."/>
            <person name="Hewinson R.G."/>
        </authorList>
    </citation>
    <scope>NUCLEOTIDE SEQUENCE [LARGE SCALE GENOMIC DNA]</scope>
    <source>
        <strain>ATCC BAA-935 / AF2122/97</strain>
    </source>
</reference>
<reference key="2">
    <citation type="journal article" date="2017" name="Genome Announc.">
        <title>Updated reference genome sequence and annotation of Mycobacterium bovis AF2122/97.</title>
        <authorList>
            <person name="Malone K.M."/>
            <person name="Farrell D."/>
            <person name="Stuber T.P."/>
            <person name="Schubert O.T."/>
            <person name="Aebersold R."/>
            <person name="Robbe-Austerman S."/>
            <person name="Gordon S.V."/>
        </authorList>
    </citation>
    <scope>NUCLEOTIDE SEQUENCE [LARGE SCALE GENOMIC DNA]</scope>
    <scope>GENOME REANNOTATION</scope>
    <source>
        <strain>ATCC BAA-935 / AF2122/97</strain>
    </source>
</reference>
<sequence>MQPGGDMSALLAQAQQMQQKLLEAQQQLANSEVHGQAGGGLVKVVVKGSGEVIGVTIDPKVVDPDDIETLQDLIVGAMRDASQQVTKMAQERLGALAGAMRPPAPPAAPPGAPGMPGMPGMPGAPGAPPVPGI</sequence>
<gene>
    <name type="ordered locus">BQ2027_MB3743C</name>
</gene>
<dbReference type="EMBL" id="LT708304">
    <property type="protein sequence ID" value="SIU02372.1"/>
    <property type="molecule type" value="Genomic_DNA"/>
</dbReference>
<dbReference type="RefSeq" id="NP_857381.1">
    <property type="nucleotide sequence ID" value="NC_002945.3"/>
</dbReference>
<dbReference type="RefSeq" id="WP_003420408.1">
    <property type="nucleotide sequence ID" value="NC_002945.4"/>
</dbReference>
<dbReference type="SMR" id="P0A655"/>
<dbReference type="KEGG" id="mbo:BQ2027_MB3743C"/>
<dbReference type="PATRIC" id="fig|233413.5.peg.4096"/>
<dbReference type="Proteomes" id="UP000001419">
    <property type="component" value="Chromosome"/>
</dbReference>
<dbReference type="GO" id="GO:0043590">
    <property type="term" value="C:bacterial nucleoid"/>
    <property type="evidence" value="ECO:0007669"/>
    <property type="project" value="UniProtKB-UniRule"/>
</dbReference>
<dbReference type="GO" id="GO:0005829">
    <property type="term" value="C:cytosol"/>
    <property type="evidence" value="ECO:0007669"/>
    <property type="project" value="TreeGrafter"/>
</dbReference>
<dbReference type="GO" id="GO:0003677">
    <property type="term" value="F:DNA binding"/>
    <property type="evidence" value="ECO:0007669"/>
    <property type="project" value="UniProtKB-UniRule"/>
</dbReference>
<dbReference type="Gene3D" id="3.30.1310.10">
    <property type="entry name" value="Nucleoid-associated protein YbaB-like domain"/>
    <property type="match status" value="1"/>
</dbReference>
<dbReference type="HAMAP" id="MF_00274">
    <property type="entry name" value="DNA_YbaB_EbfC"/>
    <property type="match status" value="1"/>
</dbReference>
<dbReference type="InterPro" id="IPR036894">
    <property type="entry name" value="YbaB-like_sf"/>
</dbReference>
<dbReference type="InterPro" id="IPR004401">
    <property type="entry name" value="YbaB/EbfC"/>
</dbReference>
<dbReference type="NCBIfam" id="TIGR00103">
    <property type="entry name" value="DNA_YbaB_EbfC"/>
    <property type="match status" value="1"/>
</dbReference>
<dbReference type="PANTHER" id="PTHR33449">
    <property type="entry name" value="NUCLEOID-ASSOCIATED PROTEIN YBAB"/>
    <property type="match status" value="1"/>
</dbReference>
<dbReference type="PANTHER" id="PTHR33449:SF1">
    <property type="entry name" value="NUCLEOID-ASSOCIATED PROTEIN YBAB"/>
    <property type="match status" value="1"/>
</dbReference>
<dbReference type="Pfam" id="PF02575">
    <property type="entry name" value="YbaB_DNA_bd"/>
    <property type="match status" value="1"/>
</dbReference>
<dbReference type="PIRSF" id="PIRSF004555">
    <property type="entry name" value="UCP004555"/>
    <property type="match status" value="1"/>
</dbReference>
<dbReference type="SUPFAM" id="SSF82607">
    <property type="entry name" value="YbaB-like"/>
    <property type="match status" value="1"/>
</dbReference>
<organism>
    <name type="scientific">Mycobacterium bovis (strain ATCC BAA-935 / AF2122/97)</name>
    <dbReference type="NCBI Taxonomy" id="233413"/>
    <lineage>
        <taxon>Bacteria</taxon>
        <taxon>Bacillati</taxon>
        <taxon>Actinomycetota</taxon>
        <taxon>Actinomycetes</taxon>
        <taxon>Mycobacteriales</taxon>
        <taxon>Mycobacteriaceae</taxon>
        <taxon>Mycobacterium</taxon>
        <taxon>Mycobacterium tuberculosis complex</taxon>
    </lineage>
</organism>
<name>Y3743_MYCBO</name>
<proteinExistence type="inferred from homology"/>
<keyword id="KW-0963">Cytoplasm</keyword>
<keyword id="KW-0238">DNA-binding</keyword>
<keyword id="KW-1185">Reference proteome</keyword>
<protein>
    <recommendedName>
        <fullName evidence="1">Nucleoid-associated protein Mb3743c</fullName>
    </recommendedName>
</protein>
<feature type="chain" id="PRO_0000170413" description="Nucleoid-associated protein Mb3743c">
    <location>
        <begin position="1"/>
        <end position="133"/>
    </location>
</feature>
<feature type="region of interest" description="Disordered" evidence="2">
    <location>
        <begin position="98"/>
        <end position="133"/>
    </location>
</feature>
<feature type="compositionally biased region" description="Pro residues" evidence="2">
    <location>
        <begin position="102"/>
        <end position="113"/>
    </location>
</feature>